<comment type="function">
    <text evidence="1">Binds as a heterodimer with protein bS6 to the central domain of the 16S rRNA, where it helps stabilize the platform of the 30S subunit.</text>
</comment>
<comment type="subunit">
    <text evidence="1">Part of the 30S ribosomal subunit. Forms a tight heterodimer with protein bS6.</text>
</comment>
<comment type="similarity">
    <text evidence="1">Belongs to the bacterial ribosomal protein bS18 family.</text>
</comment>
<dbReference type="EMBL" id="AE016828">
    <property type="protein sequence ID" value="AAO90398.1"/>
    <property type="molecule type" value="Genomic_DNA"/>
</dbReference>
<dbReference type="RefSeq" id="NP_819884.1">
    <property type="nucleotide sequence ID" value="NC_002971.4"/>
</dbReference>
<dbReference type="RefSeq" id="WP_005768821.1">
    <property type="nucleotide sequence ID" value="NZ_CDBG01000001.1"/>
</dbReference>
<dbReference type="SMR" id="Q83D75"/>
<dbReference type="STRING" id="227377.CBU_0865"/>
<dbReference type="DNASU" id="1208758"/>
<dbReference type="EnsemblBacteria" id="AAO90398">
    <property type="protein sequence ID" value="AAO90398"/>
    <property type="gene ID" value="CBU_0865"/>
</dbReference>
<dbReference type="GeneID" id="1208758"/>
<dbReference type="KEGG" id="cbu:CBU_0865"/>
<dbReference type="PATRIC" id="fig|227377.7.peg.850"/>
<dbReference type="eggNOG" id="COG0238">
    <property type="taxonomic scope" value="Bacteria"/>
</dbReference>
<dbReference type="HOGENOM" id="CLU_148710_2_3_6"/>
<dbReference type="OrthoDB" id="9812008at2"/>
<dbReference type="Proteomes" id="UP000002671">
    <property type="component" value="Chromosome"/>
</dbReference>
<dbReference type="GO" id="GO:0022627">
    <property type="term" value="C:cytosolic small ribosomal subunit"/>
    <property type="evidence" value="ECO:0000318"/>
    <property type="project" value="GO_Central"/>
</dbReference>
<dbReference type="GO" id="GO:0070181">
    <property type="term" value="F:small ribosomal subunit rRNA binding"/>
    <property type="evidence" value="ECO:0000318"/>
    <property type="project" value="GO_Central"/>
</dbReference>
<dbReference type="GO" id="GO:0003735">
    <property type="term" value="F:structural constituent of ribosome"/>
    <property type="evidence" value="ECO:0000318"/>
    <property type="project" value="GO_Central"/>
</dbReference>
<dbReference type="GO" id="GO:0006412">
    <property type="term" value="P:translation"/>
    <property type="evidence" value="ECO:0000318"/>
    <property type="project" value="GO_Central"/>
</dbReference>
<dbReference type="FunFam" id="4.10.640.10:FF:000010">
    <property type="entry name" value="30S ribosomal protein S18"/>
    <property type="match status" value="1"/>
</dbReference>
<dbReference type="Gene3D" id="4.10.640.10">
    <property type="entry name" value="Ribosomal protein S18"/>
    <property type="match status" value="1"/>
</dbReference>
<dbReference type="HAMAP" id="MF_00270">
    <property type="entry name" value="Ribosomal_bS18"/>
    <property type="match status" value="1"/>
</dbReference>
<dbReference type="InterPro" id="IPR001648">
    <property type="entry name" value="Ribosomal_bS18"/>
</dbReference>
<dbReference type="InterPro" id="IPR036870">
    <property type="entry name" value="Ribosomal_bS18_sf"/>
</dbReference>
<dbReference type="NCBIfam" id="TIGR00165">
    <property type="entry name" value="S18"/>
    <property type="match status" value="1"/>
</dbReference>
<dbReference type="PANTHER" id="PTHR13479">
    <property type="entry name" value="30S RIBOSOMAL PROTEIN S18"/>
    <property type="match status" value="1"/>
</dbReference>
<dbReference type="PANTHER" id="PTHR13479:SF40">
    <property type="entry name" value="SMALL RIBOSOMAL SUBUNIT PROTEIN BS18M"/>
    <property type="match status" value="1"/>
</dbReference>
<dbReference type="Pfam" id="PF01084">
    <property type="entry name" value="Ribosomal_S18"/>
    <property type="match status" value="1"/>
</dbReference>
<dbReference type="PRINTS" id="PR00974">
    <property type="entry name" value="RIBOSOMALS18"/>
</dbReference>
<dbReference type="SUPFAM" id="SSF46911">
    <property type="entry name" value="Ribosomal protein S18"/>
    <property type="match status" value="1"/>
</dbReference>
<protein>
    <recommendedName>
        <fullName evidence="1">Small ribosomal subunit protein bS18</fullName>
    </recommendedName>
    <alternativeName>
        <fullName evidence="2">30S ribosomal protein S18</fullName>
    </alternativeName>
</protein>
<gene>
    <name evidence="1" type="primary">rpsR</name>
    <name type="ordered locus">CBU_0865</name>
</gene>
<name>RS18_COXBU</name>
<proteinExistence type="inferred from homology"/>
<sequence length="73" mass="8553">MSFRRKKFCAFDAKNLQEIDYKDVNTLKDYIMESGRVVPSRITGTCAKHQRQISRAIKLARYLALLPYCDTHQ</sequence>
<reference key="1">
    <citation type="journal article" date="2003" name="Proc. Natl. Acad. Sci. U.S.A.">
        <title>Complete genome sequence of the Q-fever pathogen, Coxiella burnetii.</title>
        <authorList>
            <person name="Seshadri R."/>
            <person name="Paulsen I.T."/>
            <person name="Eisen J.A."/>
            <person name="Read T.D."/>
            <person name="Nelson K.E."/>
            <person name="Nelson W.C."/>
            <person name="Ward N.L."/>
            <person name="Tettelin H."/>
            <person name="Davidsen T.M."/>
            <person name="Beanan M.J."/>
            <person name="DeBoy R.T."/>
            <person name="Daugherty S.C."/>
            <person name="Brinkac L.M."/>
            <person name="Madupu R."/>
            <person name="Dodson R.J."/>
            <person name="Khouri H.M."/>
            <person name="Lee K.H."/>
            <person name="Carty H.A."/>
            <person name="Scanlan D."/>
            <person name="Heinzen R.A."/>
            <person name="Thompson H.A."/>
            <person name="Samuel J.E."/>
            <person name="Fraser C.M."/>
            <person name="Heidelberg J.F."/>
        </authorList>
    </citation>
    <scope>NUCLEOTIDE SEQUENCE [LARGE SCALE GENOMIC DNA]</scope>
    <source>
        <strain>RSA 493 / Nine Mile phase I</strain>
    </source>
</reference>
<keyword id="KW-1185">Reference proteome</keyword>
<keyword id="KW-0687">Ribonucleoprotein</keyword>
<keyword id="KW-0689">Ribosomal protein</keyword>
<keyword id="KW-0694">RNA-binding</keyword>
<keyword id="KW-0699">rRNA-binding</keyword>
<evidence type="ECO:0000255" key="1">
    <source>
        <dbReference type="HAMAP-Rule" id="MF_00270"/>
    </source>
</evidence>
<evidence type="ECO:0000305" key="2"/>
<accession>Q83D75</accession>
<organism>
    <name type="scientific">Coxiella burnetii (strain RSA 493 / Nine Mile phase I)</name>
    <dbReference type="NCBI Taxonomy" id="227377"/>
    <lineage>
        <taxon>Bacteria</taxon>
        <taxon>Pseudomonadati</taxon>
        <taxon>Pseudomonadota</taxon>
        <taxon>Gammaproteobacteria</taxon>
        <taxon>Legionellales</taxon>
        <taxon>Coxiellaceae</taxon>
        <taxon>Coxiella</taxon>
    </lineage>
</organism>
<feature type="chain" id="PRO_0000111149" description="Small ribosomal subunit protein bS18">
    <location>
        <begin position="1"/>
        <end position="73"/>
    </location>
</feature>